<evidence type="ECO:0000255" key="1"/>
<evidence type="ECO:0000305" key="2"/>
<accession>Q25BG7</accession>
<protein>
    <recommendedName>
        <fullName>Putative transmembrane protein ORF28</fullName>
    </recommendedName>
</protein>
<organismHost>
    <name type="scientific">Haloarcula hispanica</name>
    <dbReference type="NCBI Taxonomy" id="51589"/>
</organismHost>
<proteinExistence type="predicted"/>
<dbReference type="EMBL" id="AF191796">
    <property type="protein sequence ID" value="AAQ13747.1"/>
    <property type="molecule type" value="Genomic_DNA"/>
</dbReference>
<dbReference type="RefSeq" id="YP_529540.1">
    <property type="nucleotide sequence ID" value="NC_007914.1"/>
</dbReference>
<dbReference type="KEGG" id="vg:5142399"/>
<dbReference type="Proteomes" id="UP000007024">
    <property type="component" value="Segment"/>
</dbReference>
<dbReference type="GO" id="GO:0033644">
    <property type="term" value="C:host cell membrane"/>
    <property type="evidence" value="ECO:0007669"/>
    <property type="project" value="UniProtKB-SubCell"/>
</dbReference>
<dbReference type="GO" id="GO:0016020">
    <property type="term" value="C:membrane"/>
    <property type="evidence" value="ECO:0007669"/>
    <property type="project" value="UniProtKB-KW"/>
</dbReference>
<feature type="chain" id="PRO_0000384896" description="Putative transmembrane protein ORF28">
    <location>
        <begin position="1"/>
        <end position="85"/>
    </location>
</feature>
<feature type="transmembrane region" description="Helical" evidence="1">
    <location>
        <begin position="32"/>
        <end position="52"/>
    </location>
</feature>
<feature type="transmembrane region" description="Helical" evidence="1">
    <location>
        <begin position="59"/>
        <end position="79"/>
    </location>
</feature>
<organism>
    <name type="scientific">His1 virus (isolate Australia/Victoria)</name>
    <name type="common">His1V</name>
    <name type="synonym">Haloarcula hispanica virus 1</name>
    <dbReference type="NCBI Taxonomy" id="654912"/>
    <lineage>
        <taxon>Viruses</taxon>
        <taxon>Viruses incertae sedis</taxon>
        <taxon>Halspiviridae</taxon>
        <taxon>Salterprovirus</taxon>
        <taxon>Salterprovirus His1</taxon>
    </lineage>
</organism>
<name>Y028_HIS1I</name>
<comment type="subcellular location">
    <subcellularLocation>
        <location evidence="2">Host membrane</location>
        <topology evidence="2">Multi-pass membrane protein</topology>
    </subcellularLocation>
</comment>
<reference key="1">
    <citation type="journal article" date="2006" name="Virology">
        <title>His1 and His2 are distantly related, spindle-shaped haloviruses belonging to the novel virus group, Salterprovirus.</title>
        <authorList>
            <person name="Bath C."/>
            <person name="Cukalac T."/>
            <person name="Porter K."/>
            <person name="Dyall-Smith M.L."/>
        </authorList>
    </citation>
    <scope>NUCLEOTIDE SEQUENCE [GENOMIC DNA]</scope>
</reference>
<keyword id="KW-1043">Host membrane</keyword>
<keyword id="KW-0472">Membrane</keyword>
<keyword id="KW-1185">Reference proteome</keyword>
<keyword id="KW-0812">Transmembrane</keyword>
<keyword id="KW-1133">Transmembrane helix</keyword>
<gene>
    <name type="ORF">ORF28</name>
</gene>
<sequence>MKAKQEIKKIKEFDYDAWIESKELKDIFPPRIMLLWWIGILGMLNYNLVQIVPNSGVALLSVSTFIVGCGLCIGFMLGIEQKKNR</sequence>